<comment type="function">
    <text evidence="2 3">Cell wall-anchored surface receptor that participates in the extraction of heme from oxidized methemoglobin/metHb to enable growth on hemoglobin as a sole iron source (By similarity). Receives heme from IsdB and transfers it to IsdC (By similarity). Also plays a role in the inhibition of host immune response. Protects S.aureus against the bactericidal protease activity of apolactoferrin. Decreases bacterial cellular hydrophobicity, which renders S.aureus resistant to bactericidal human skin fatty acids as well as to beta-defensins and cathelicidin. Also binds fibronectin and chains B-beta and gamma of fibrinogen, promoting clumping of S.aureus with fibrinogen. Involved in adherence of S.aureus to human desquamated nasal epithelial cells and is required for nasal colonization (By similarity).</text>
</comment>
<comment type="function">
    <text evidence="8">Alters host JAK2-STAT3 signaling, affecting host cell transcription and signal transduction (tested in green monkey kidney Vero E6 cells). Changes the phosphorylation level of STAT3; in the presence of bacteria much less phosphorylation of STAT3 is seen. Promotes the replication of human coronavirus SARS-CoV-2 in host (human and Vero E6) cells; both bacteria and recombinant IsdA have this activity. Promotes replication of at least 2 SARS-CoV-2 variants (the original and delta).</text>
</comment>
<comment type="subunit">
    <text evidence="2 3">Monomer. Interacts with IsdC (By similarity). Interacts with IsdB (By similarity).</text>
</comment>
<comment type="subcellular location">
    <subcellularLocation>
        <location evidence="8">Secreted</location>
        <location evidence="8">Cell wall</location>
        <topology evidence="2">Peptidoglycan-anchor</topology>
    </subcellularLocation>
    <subcellularLocation>
        <location evidence="8">Secreted</location>
    </subcellularLocation>
    <text evidence="2 10">Encodes an LPXTG motif-containing sorting signal that targets its attachment to the cell wall, catalyzed by sortase A (By similarity). Probably released from the cell surface as peptidglycan is renewed (Probable) (PubMed:36687318).</text>
</comment>
<comment type="induction">
    <text evidence="1">Repressed by fur in the presence of iron.</text>
</comment>
<comment type="domain">
    <text evidence="1">The NEAT domain is responsible for binding Fe(3+) and Fe(2+) heme and fibrinogen. The NEAT domain is an inhibitor of apolactoferrin activity, while the C-domain confers resistance to bovine lactoferricin (By similarity).</text>
</comment>
<comment type="disruption phenotype">
    <text evidence="8">Bacteria no longer promote replication of human coronavirus SARS-CoV-2 in host (human and green monkey kidney Vero E6) cells.</text>
</comment>
<comment type="miscellaneous">
    <text evidence="10">S.aureus is the most prevalent species in SARS-CoV-2 patients co-infected with bacteria, and is one of the most common pathogens in respiratory virus infection with secondary bacterial co-infection. Co-infection with S.aureus can increase mortality dramatically.</text>
</comment>
<comment type="similarity">
    <text evidence="9">Belongs to the IsdA family.</text>
</comment>
<gene>
    <name type="primary">isdA</name>
    <name type="synonym">frpA</name>
    <name type="synonym">stbA</name>
    <name type="ordered locus">SAUSA300_1029</name>
</gene>
<sequence length="350" mass="38746">MTKHYLNSKYQSEQRSSAMKKITMGTASIILGSLVYIGADSQQVNAATEATNATNNQSTQVSQATSQPINFQVQKDGSSEKSHMDDYMQHPGKVIKQNNKYYFQTVLNNASFWKEYKFYNANNQELATTVVNDNKKADTRTINVAVEPGYKSLTTKVHIVVPQINYNHRYTTHLEFEKAIPTLADAAKPNNVKPVQPKPAQPKTPTEQTKPVQPKVEKVKPTVTTTSKVEDNHSTKVVSTDTTKDQTKTQTAHTVKTAQTAQEQNKVQTPVKDVATAKSESNNQAVSDNKSQQTNKVTKHNETPKQASKAKELPKTGLTSVDNFISTVAFATLALLGSLSLLLFKRKESK</sequence>
<protein>
    <recommendedName>
        <fullName>Iron-regulated surface determinant protein A</fullName>
    </recommendedName>
    <alternativeName>
        <fullName>Fur-regulated protein A</fullName>
    </alternativeName>
    <alternativeName>
        <fullName>Staphylococcal transferrin-binding protein A</fullName>
    </alternativeName>
</protein>
<feature type="signal peptide" evidence="1">
    <location>
        <begin position="1"/>
        <end position="46"/>
    </location>
</feature>
<feature type="chain" id="PRO_0000284434" description="Iron-regulated surface determinant protein A">
    <location>
        <begin position="47"/>
        <end position="316"/>
    </location>
</feature>
<feature type="propeptide" id="PRO_0000284435" description="Removed by sortase A" evidence="6">
    <location>
        <begin position="317"/>
        <end position="350"/>
    </location>
</feature>
<feature type="domain" description="NEAT" evidence="5">
    <location>
        <begin position="62"/>
        <end position="184"/>
    </location>
</feature>
<feature type="region of interest" description="Disordered" evidence="7">
    <location>
        <begin position="188"/>
        <end position="314"/>
    </location>
</feature>
<feature type="short sequence motif" description="LPXTG sorting signal" evidence="6">
    <location>
        <begin position="313"/>
        <end position="317"/>
    </location>
</feature>
<feature type="compositionally biased region" description="Low complexity" evidence="7">
    <location>
        <begin position="203"/>
        <end position="214"/>
    </location>
</feature>
<feature type="compositionally biased region" description="Polar residues" evidence="7">
    <location>
        <begin position="252"/>
        <end position="268"/>
    </location>
</feature>
<feature type="compositionally biased region" description="Polar residues" evidence="7">
    <location>
        <begin position="278"/>
        <end position="296"/>
    </location>
</feature>
<feature type="compositionally biased region" description="Basic and acidic residues" evidence="7">
    <location>
        <begin position="299"/>
        <end position="314"/>
    </location>
</feature>
<feature type="binding site" evidence="1">
    <location>
        <position position="75"/>
    </location>
    <ligand>
        <name>heme</name>
        <dbReference type="ChEBI" id="CHEBI:30413"/>
    </ligand>
</feature>
<feature type="binding site" evidence="1">
    <location>
        <position position="82"/>
    </location>
    <ligand>
        <name>heme</name>
        <dbReference type="ChEBI" id="CHEBI:30413"/>
    </ligand>
</feature>
<feature type="binding site" description="axial binding residue" evidence="4">
    <location>
        <position position="166"/>
    </location>
    <ligand>
        <name>heme</name>
        <dbReference type="ChEBI" id="CHEBI:30413"/>
    </ligand>
    <ligandPart>
        <name>Fe</name>
        <dbReference type="ChEBI" id="CHEBI:18248"/>
    </ligandPart>
</feature>
<feature type="modified residue" description="Pentaglycyl murein peptidoglycan amidated threonine" evidence="6">
    <location>
        <position position="316"/>
    </location>
</feature>
<reference key="1">
    <citation type="journal article" date="2006" name="Lancet">
        <title>Complete genome sequence of USA300, an epidemic clone of community-acquired meticillin-resistant Staphylococcus aureus.</title>
        <authorList>
            <person name="Diep B.A."/>
            <person name="Gill S.R."/>
            <person name="Chang R.F."/>
            <person name="Phan T.H."/>
            <person name="Chen J.H."/>
            <person name="Davidson M.G."/>
            <person name="Lin F."/>
            <person name="Lin J."/>
            <person name="Carleton H.A."/>
            <person name="Mongodin E.F."/>
            <person name="Sensabaugh G.F."/>
            <person name="Perdreau-Remington F."/>
        </authorList>
    </citation>
    <scope>NUCLEOTIDE SEQUENCE [LARGE SCALE GENOMIC DNA]</scope>
    <source>
        <strain>USA300</strain>
    </source>
</reference>
<reference key="2">
    <citation type="journal article" date="2023" name="IScience">
        <title>The Staphylococcus aureus protein IsdA increases SARS CoV-2 replication by modulating JAK-STAT signaling.</title>
        <authorList>
            <person name="Goncheva M.I."/>
            <person name="Gibson R.M."/>
            <person name="Shouldice A.C."/>
            <person name="Dikeakos J.D."/>
            <person name="Heinrichs D.E."/>
        </authorList>
    </citation>
    <scope>POSSIBLE FUNCTION IN HOST SIGNALING</scope>
    <scope>FUNCTION IN HOST COVID INFECTION</scope>
    <scope>SUBCELLULAR LOCATION</scope>
    <scope>DISRUPTION PHENOTYPE</scope>
    <source>
        <strain>USA300 / LAC</strain>
    </source>
</reference>
<keyword id="KW-0134">Cell wall</keyword>
<keyword id="KW-0349">Heme</keyword>
<keyword id="KW-0408">Iron</keyword>
<keyword id="KW-0479">Metal-binding</keyword>
<keyword id="KW-0572">Peptidoglycan-anchor</keyword>
<keyword id="KW-0964">Secreted</keyword>
<keyword id="KW-0732">Signal</keyword>
<keyword id="KW-0843">Virulence</keyword>
<name>ISDA_STAA3</name>
<accession>Q2FHV1</accession>
<dbReference type="EMBL" id="CP000255">
    <property type="protein sequence ID" value="ABD21627.1"/>
    <property type="molecule type" value="Genomic_DNA"/>
</dbReference>
<dbReference type="RefSeq" id="WP_000160859.1">
    <property type="nucleotide sequence ID" value="NZ_CP027476.1"/>
</dbReference>
<dbReference type="SMR" id="Q2FHV1"/>
<dbReference type="KEGG" id="saa:SAUSA300_1029"/>
<dbReference type="HOGENOM" id="CLU_068057_0_0_9"/>
<dbReference type="OMA" id="MTINHSK"/>
<dbReference type="PRO" id="PR:Q2FHV1"/>
<dbReference type="Proteomes" id="UP000001939">
    <property type="component" value="Chromosome"/>
</dbReference>
<dbReference type="GO" id="GO:0005576">
    <property type="term" value="C:extracellular region"/>
    <property type="evidence" value="ECO:0007669"/>
    <property type="project" value="UniProtKB-SubCell"/>
</dbReference>
<dbReference type="GO" id="GO:0046872">
    <property type="term" value="F:metal ion binding"/>
    <property type="evidence" value="ECO:0007669"/>
    <property type="project" value="UniProtKB-KW"/>
</dbReference>
<dbReference type="CDD" id="cd06920">
    <property type="entry name" value="NEAT"/>
    <property type="match status" value="1"/>
</dbReference>
<dbReference type="Gene3D" id="2.60.40.1850">
    <property type="match status" value="1"/>
</dbReference>
<dbReference type="InterPro" id="IPR050436">
    <property type="entry name" value="IsdA"/>
</dbReference>
<dbReference type="InterPro" id="IPR019931">
    <property type="entry name" value="LPXTG_anchor"/>
</dbReference>
<dbReference type="InterPro" id="IPR006635">
    <property type="entry name" value="NEAT_dom"/>
</dbReference>
<dbReference type="InterPro" id="IPR037250">
    <property type="entry name" value="NEAT_dom_sf"/>
</dbReference>
<dbReference type="NCBIfam" id="TIGR01167">
    <property type="entry name" value="LPXTG_anchor"/>
    <property type="match status" value="1"/>
</dbReference>
<dbReference type="PANTHER" id="PTHR37824">
    <property type="entry name" value="IRON-REGULATED SURFACE DETERMINANT PROTEIN C"/>
    <property type="match status" value="1"/>
</dbReference>
<dbReference type="PANTHER" id="PTHR37824:SF1">
    <property type="entry name" value="IRON-REGULATED SURFACE DETERMINANT PROTEIN C"/>
    <property type="match status" value="1"/>
</dbReference>
<dbReference type="Pfam" id="PF00746">
    <property type="entry name" value="Gram_pos_anchor"/>
    <property type="match status" value="1"/>
</dbReference>
<dbReference type="Pfam" id="PF05031">
    <property type="entry name" value="NEAT"/>
    <property type="match status" value="1"/>
</dbReference>
<dbReference type="SMART" id="SM00725">
    <property type="entry name" value="NEAT"/>
    <property type="match status" value="1"/>
</dbReference>
<dbReference type="SUPFAM" id="SSF158911">
    <property type="entry name" value="NEAT domain-like"/>
    <property type="match status" value="1"/>
</dbReference>
<dbReference type="PROSITE" id="PS50847">
    <property type="entry name" value="GRAM_POS_ANCHORING"/>
    <property type="match status" value="1"/>
</dbReference>
<dbReference type="PROSITE" id="PS50978">
    <property type="entry name" value="NEAT"/>
    <property type="match status" value="1"/>
</dbReference>
<evidence type="ECO:0000250" key="1"/>
<evidence type="ECO:0000250" key="2">
    <source>
        <dbReference type="UniProtKB" id="A6QG31"/>
    </source>
</evidence>
<evidence type="ECO:0000250" key="3">
    <source>
        <dbReference type="UniProtKB" id="Q7A152"/>
    </source>
</evidence>
<evidence type="ECO:0000250" key="4">
    <source>
        <dbReference type="UniProtKB" id="Q7A655"/>
    </source>
</evidence>
<evidence type="ECO:0000255" key="5">
    <source>
        <dbReference type="PROSITE-ProRule" id="PRU00337"/>
    </source>
</evidence>
<evidence type="ECO:0000255" key="6">
    <source>
        <dbReference type="PROSITE-ProRule" id="PRU00477"/>
    </source>
</evidence>
<evidence type="ECO:0000256" key="7">
    <source>
        <dbReference type="SAM" id="MobiDB-lite"/>
    </source>
</evidence>
<evidence type="ECO:0000269" key="8">
    <source>
    </source>
</evidence>
<evidence type="ECO:0000305" key="9"/>
<evidence type="ECO:0000305" key="10">
    <source>
    </source>
</evidence>
<proteinExistence type="evidence at protein level"/>
<organism>
    <name type="scientific">Staphylococcus aureus (strain USA300)</name>
    <dbReference type="NCBI Taxonomy" id="367830"/>
    <lineage>
        <taxon>Bacteria</taxon>
        <taxon>Bacillati</taxon>
        <taxon>Bacillota</taxon>
        <taxon>Bacilli</taxon>
        <taxon>Bacillales</taxon>
        <taxon>Staphylococcaceae</taxon>
        <taxon>Staphylococcus</taxon>
    </lineage>
</organism>